<organism>
    <name type="scientific">Buchnera aphidicola subsp. Schizaphis graminum (strain Sg)</name>
    <dbReference type="NCBI Taxonomy" id="198804"/>
    <lineage>
        <taxon>Bacteria</taxon>
        <taxon>Pseudomonadati</taxon>
        <taxon>Pseudomonadota</taxon>
        <taxon>Gammaproteobacteria</taxon>
        <taxon>Enterobacterales</taxon>
        <taxon>Erwiniaceae</taxon>
        <taxon>Buchnera</taxon>
    </lineage>
</organism>
<evidence type="ECO:0000255" key="1">
    <source>
        <dbReference type="HAMAP-Rule" id="MF_00390"/>
    </source>
</evidence>
<gene>
    <name evidence="1" type="primary">tusD</name>
    <name type="ordered locus">BUsg_513</name>
</gene>
<sequence length="128" mass="14341">MNYTVLVTGSAYGTQNASTAFLFCQSLIKMSHILNSVFFYCDGVLNANNFNKPSVDEFDLLSAWKQLNEKNKVKLYVCVSAASRRGVIEDEKISNTKIKNGNFASFFQSSGLLELAYSIKISDRIIQF</sequence>
<keyword id="KW-0963">Cytoplasm</keyword>
<keyword id="KW-0808">Transferase</keyword>
<keyword id="KW-0819">tRNA processing</keyword>
<accession>Q8K944</accession>
<comment type="function">
    <text evidence="1">Part of a sulfur-relay system required for 2-thiolation of 5-methylaminomethyl-2-thiouridine (mnm(5)s(2)U) at tRNA wobble positions. Accepts sulfur from TusA and transfers it in turn to TusE.</text>
</comment>
<comment type="subunit">
    <text evidence="1">Heterohexamer, formed by a dimer of trimers. The hexameric TusBCD complex contains 2 copies each of TusB, TusC and TusD. The TusBCD complex interacts with TusE.</text>
</comment>
<comment type="subcellular location">
    <subcellularLocation>
        <location evidence="1">Cytoplasm</location>
    </subcellularLocation>
</comment>
<comment type="similarity">
    <text evidence="1">Belongs to the DsrE/TusD family.</text>
</comment>
<protein>
    <recommendedName>
        <fullName evidence="1">Sulfurtransferase TusD</fullName>
        <ecNumber evidence="1">2.8.1.-</ecNumber>
    </recommendedName>
    <alternativeName>
        <fullName evidence="1">tRNA 2-thiouridine synthesizing protein D</fullName>
    </alternativeName>
</protein>
<dbReference type="EC" id="2.8.1.-" evidence="1"/>
<dbReference type="EMBL" id="AE013218">
    <property type="protein sequence ID" value="AAM68056.1"/>
    <property type="molecule type" value="Genomic_DNA"/>
</dbReference>
<dbReference type="RefSeq" id="WP_011054022.1">
    <property type="nucleotide sequence ID" value="NC_004061.1"/>
</dbReference>
<dbReference type="SMR" id="Q8K944"/>
<dbReference type="STRING" id="198804.BUsg_513"/>
<dbReference type="GeneID" id="93003988"/>
<dbReference type="KEGG" id="bas:BUsg_513"/>
<dbReference type="eggNOG" id="COG1553">
    <property type="taxonomic scope" value="Bacteria"/>
</dbReference>
<dbReference type="HOGENOM" id="CLU_132095_0_0_6"/>
<dbReference type="Proteomes" id="UP000000416">
    <property type="component" value="Chromosome"/>
</dbReference>
<dbReference type="GO" id="GO:1990228">
    <property type="term" value="C:sulfurtransferase complex"/>
    <property type="evidence" value="ECO:0007669"/>
    <property type="project" value="TreeGrafter"/>
</dbReference>
<dbReference type="GO" id="GO:0097163">
    <property type="term" value="F:sulfur carrier activity"/>
    <property type="evidence" value="ECO:0007669"/>
    <property type="project" value="TreeGrafter"/>
</dbReference>
<dbReference type="GO" id="GO:0016783">
    <property type="term" value="F:sulfurtransferase activity"/>
    <property type="evidence" value="ECO:0007669"/>
    <property type="project" value="UniProtKB-UniRule"/>
</dbReference>
<dbReference type="GO" id="GO:0002143">
    <property type="term" value="P:tRNA wobble position uridine thiolation"/>
    <property type="evidence" value="ECO:0007669"/>
    <property type="project" value="TreeGrafter"/>
</dbReference>
<dbReference type="Gene3D" id="3.40.1260.10">
    <property type="entry name" value="DsrEFH-like"/>
    <property type="match status" value="1"/>
</dbReference>
<dbReference type="HAMAP" id="MF_00390">
    <property type="entry name" value="Thiourid_synth_D"/>
    <property type="match status" value="1"/>
</dbReference>
<dbReference type="InterPro" id="IPR027396">
    <property type="entry name" value="DsrEFH-like"/>
</dbReference>
<dbReference type="InterPro" id="IPR003787">
    <property type="entry name" value="Sulphur_relay_DsrE/F-like"/>
</dbReference>
<dbReference type="InterPro" id="IPR017463">
    <property type="entry name" value="Sulphur_relay_TusD/DsrE"/>
</dbReference>
<dbReference type="NCBIfam" id="NF001237">
    <property type="entry name" value="PRK00207.1"/>
    <property type="match status" value="1"/>
</dbReference>
<dbReference type="NCBIfam" id="TIGR03012">
    <property type="entry name" value="sulf_tusD_dsrE"/>
    <property type="match status" value="1"/>
</dbReference>
<dbReference type="PANTHER" id="PTHR34874">
    <property type="entry name" value="PROTEIN YCHN"/>
    <property type="match status" value="1"/>
</dbReference>
<dbReference type="PANTHER" id="PTHR34874:SF3">
    <property type="entry name" value="SULFURTRANSFERASE TUSD"/>
    <property type="match status" value="1"/>
</dbReference>
<dbReference type="Pfam" id="PF02635">
    <property type="entry name" value="DsrE"/>
    <property type="match status" value="1"/>
</dbReference>
<dbReference type="SUPFAM" id="SSF75169">
    <property type="entry name" value="DsrEFH-like"/>
    <property type="match status" value="1"/>
</dbReference>
<reference key="1">
    <citation type="journal article" date="2002" name="Science">
        <title>50 million years of genomic stasis in endosymbiotic bacteria.</title>
        <authorList>
            <person name="Tamas I."/>
            <person name="Klasson L."/>
            <person name="Canbaeck B."/>
            <person name="Naeslund A.K."/>
            <person name="Eriksson A.-S."/>
            <person name="Wernegreen J.J."/>
            <person name="Sandstroem J.P."/>
            <person name="Moran N.A."/>
            <person name="Andersson S.G.E."/>
        </authorList>
    </citation>
    <scope>NUCLEOTIDE SEQUENCE [LARGE SCALE GENOMIC DNA]</scope>
    <source>
        <strain>Sg</strain>
    </source>
</reference>
<proteinExistence type="inferred from homology"/>
<feature type="chain" id="PRO_0000214722" description="Sulfurtransferase TusD">
    <location>
        <begin position="1"/>
        <end position="128"/>
    </location>
</feature>
<feature type="active site" description="Cysteine persulfide intermediate" evidence="1">
    <location>
        <position position="78"/>
    </location>
</feature>
<name>TUSD_BUCAP</name>